<organism>
    <name type="scientific">Bacillus subtilis (strain 168)</name>
    <dbReference type="NCBI Taxonomy" id="224308"/>
    <lineage>
        <taxon>Bacteria</taxon>
        <taxon>Bacillati</taxon>
        <taxon>Bacillota</taxon>
        <taxon>Bacilli</taxon>
        <taxon>Bacillales</taxon>
        <taxon>Bacillaceae</taxon>
        <taxon>Bacillus</taxon>
    </lineage>
</organism>
<feature type="chain" id="PRO_0000201964" description="Septum site-determining protein MinD">
    <location>
        <begin position="1"/>
        <end position="268"/>
    </location>
</feature>
<feature type="binding site" evidence="2">
    <location>
        <begin position="11"/>
        <end position="18"/>
    </location>
    <ligand>
        <name>ATP</name>
        <dbReference type="ChEBI" id="CHEBI:30616"/>
    </ligand>
</feature>
<proteinExistence type="evidence at protein level"/>
<protein>
    <recommendedName>
        <fullName>Septum site-determining protein MinD</fullName>
    </recommendedName>
    <alternativeName>
        <fullName>Cell division inhibitor MinD</fullName>
    </alternativeName>
</protein>
<evidence type="ECO:0000250" key="1"/>
<evidence type="ECO:0000250" key="2">
    <source>
        <dbReference type="UniProtKB" id="Q72H90"/>
    </source>
</evidence>
<evidence type="ECO:0000269" key="3">
    <source>
    </source>
</evidence>
<evidence type="ECO:0000269" key="4">
    <source>
    </source>
</evidence>
<evidence type="ECO:0000305" key="5"/>
<sequence length="268" mass="29407">MGEAIVITSGKGGVGKTTTSANLGTALAILGKRVCLVDTDIGLRNLDVVMGLENRIIYDLVDVVEGRCKMHQALVKDKRFDDLLYLMPAAQTSDKTAVAPEQIKNMVQELKQEFDYVIIDCPAGIEQGYKNAVSGADKAIVVTTPEISAVRDADRIIGLLEQEENIEPPRLVVNRIRNHLMKNGDTMDIDEIVQHLSIDLLGIVADDDEVIKASNHGEPIAMDPKNRASIAYRNIARRILGESVPLQVLEEQNKGMMAKIKSFFGVRS</sequence>
<name>MIND_BACSU</name>
<accession>Q01464</accession>
<reference key="1">
    <citation type="journal article" date="1992" name="J. Bacteriol.">
        <title>The divIVB region of the Bacillus subtilis chromosome encodes homologs of Escherichia coli septum placement (minCD) and cell shape (mreBCD) determinants.</title>
        <authorList>
            <person name="Varley A.W."/>
            <person name="Stewart G.C."/>
        </authorList>
    </citation>
    <scope>NUCLEOTIDE SEQUENCE [GENOMIC DNA]</scope>
    <source>
        <strain>168</strain>
    </source>
</reference>
<reference key="2">
    <citation type="journal article" date="1993" name="Mol. Microbiol.">
        <title>The minCD locus of Bacillus subtilis lacks the minE determinant that provides topological specificity to cell division.</title>
        <authorList>
            <person name="Lee S."/>
            <person name="Price C.W."/>
        </authorList>
    </citation>
    <scope>NUCLEOTIDE SEQUENCE [GENOMIC DNA]</scope>
    <source>
        <strain>168</strain>
    </source>
</reference>
<reference key="3">
    <citation type="journal article" date="1992" name="J. Bacteriol.">
        <title>Identification of Bacillus subtilis genes for septum placement and shape determination.</title>
        <authorList>
            <person name="Levin P.A."/>
            <person name="Margolis P.S."/>
            <person name="Setlow P."/>
            <person name="Losick R."/>
            <person name="Sun D."/>
        </authorList>
    </citation>
    <scope>NUCLEOTIDE SEQUENCE [GENOMIC DNA]</scope>
</reference>
<reference key="4">
    <citation type="journal article" date="1997" name="Nature">
        <title>The complete genome sequence of the Gram-positive bacterium Bacillus subtilis.</title>
        <authorList>
            <person name="Kunst F."/>
            <person name="Ogasawara N."/>
            <person name="Moszer I."/>
            <person name="Albertini A.M."/>
            <person name="Alloni G."/>
            <person name="Azevedo V."/>
            <person name="Bertero M.G."/>
            <person name="Bessieres P."/>
            <person name="Bolotin A."/>
            <person name="Borchert S."/>
            <person name="Borriss R."/>
            <person name="Boursier L."/>
            <person name="Brans A."/>
            <person name="Braun M."/>
            <person name="Brignell S.C."/>
            <person name="Bron S."/>
            <person name="Brouillet S."/>
            <person name="Bruschi C.V."/>
            <person name="Caldwell B."/>
            <person name="Capuano V."/>
            <person name="Carter N.M."/>
            <person name="Choi S.-K."/>
            <person name="Codani J.-J."/>
            <person name="Connerton I.F."/>
            <person name="Cummings N.J."/>
            <person name="Daniel R.A."/>
            <person name="Denizot F."/>
            <person name="Devine K.M."/>
            <person name="Duesterhoeft A."/>
            <person name="Ehrlich S.D."/>
            <person name="Emmerson P.T."/>
            <person name="Entian K.-D."/>
            <person name="Errington J."/>
            <person name="Fabret C."/>
            <person name="Ferrari E."/>
            <person name="Foulger D."/>
            <person name="Fritz C."/>
            <person name="Fujita M."/>
            <person name="Fujita Y."/>
            <person name="Fuma S."/>
            <person name="Galizzi A."/>
            <person name="Galleron N."/>
            <person name="Ghim S.-Y."/>
            <person name="Glaser P."/>
            <person name="Goffeau A."/>
            <person name="Golightly E.J."/>
            <person name="Grandi G."/>
            <person name="Guiseppi G."/>
            <person name="Guy B.J."/>
            <person name="Haga K."/>
            <person name="Haiech J."/>
            <person name="Harwood C.R."/>
            <person name="Henaut A."/>
            <person name="Hilbert H."/>
            <person name="Holsappel S."/>
            <person name="Hosono S."/>
            <person name="Hullo M.-F."/>
            <person name="Itaya M."/>
            <person name="Jones L.-M."/>
            <person name="Joris B."/>
            <person name="Karamata D."/>
            <person name="Kasahara Y."/>
            <person name="Klaerr-Blanchard M."/>
            <person name="Klein C."/>
            <person name="Kobayashi Y."/>
            <person name="Koetter P."/>
            <person name="Koningstein G."/>
            <person name="Krogh S."/>
            <person name="Kumano M."/>
            <person name="Kurita K."/>
            <person name="Lapidus A."/>
            <person name="Lardinois S."/>
            <person name="Lauber J."/>
            <person name="Lazarevic V."/>
            <person name="Lee S.-M."/>
            <person name="Levine A."/>
            <person name="Liu H."/>
            <person name="Masuda S."/>
            <person name="Mauel C."/>
            <person name="Medigue C."/>
            <person name="Medina N."/>
            <person name="Mellado R.P."/>
            <person name="Mizuno M."/>
            <person name="Moestl D."/>
            <person name="Nakai S."/>
            <person name="Noback M."/>
            <person name="Noone D."/>
            <person name="O'Reilly M."/>
            <person name="Ogawa K."/>
            <person name="Ogiwara A."/>
            <person name="Oudega B."/>
            <person name="Park S.-H."/>
            <person name="Parro V."/>
            <person name="Pohl T.M."/>
            <person name="Portetelle D."/>
            <person name="Porwollik S."/>
            <person name="Prescott A.M."/>
            <person name="Presecan E."/>
            <person name="Pujic P."/>
            <person name="Purnelle B."/>
            <person name="Rapoport G."/>
            <person name="Rey M."/>
            <person name="Reynolds S."/>
            <person name="Rieger M."/>
            <person name="Rivolta C."/>
            <person name="Rocha E."/>
            <person name="Roche B."/>
            <person name="Rose M."/>
            <person name="Sadaie Y."/>
            <person name="Sato T."/>
            <person name="Scanlan E."/>
            <person name="Schleich S."/>
            <person name="Schroeter R."/>
            <person name="Scoffone F."/>
            <person name="Sekiguchi J."/>
            <person name="Sekowska A."/>
            <person name="Seror S.J."/>
            <person name="Serror P."/>
            <person name="Shin B.-S."/>
            <person name="Soldo B."/>
            <person name="Sorokin A."/>
            <person name="Tacconi E."/>
            <person name="Takagi T."/>
            <person name="Takahashi H."/>
            <person name="Takemaru K."/>
            <person name="Takeuchi M."/>
            <person name="Tamakoshi A."/>
            <person name="Tanaka T."/>
            <person name="Terpstra P."/>
            <person name="Tognoni A."/>
            <person name="Tosato V."/>
            <person name="Uchiyama S."/>
            <person name="Vandenbol M."/>
            <person name="Vannier F."/>
            <person name="Vassarotti A."/>
            <person name="Viari A."/>
            <person name="Wambutt R."/>
            <person name="Wedler E."/>
            <person name="Wedler H."/>
            <person name="Weitzenegger T."/>
            <person name="Winters P."/>
            <person name="Wipat A."/>
            <person name="Yamamoto H."/>
            <person name="Yamane K."/>
            <person name="Yasumoto K."/>
            <person name="Yata K."/>
            <person name="Yoshida K."/>
            <person name="Yoshikawa H.-F."/>
            <person name="Zumstein E."/>
            <person name="Yoshikawa H."/>
            <person name="Danchin A."/>
        </authorList>
    </citation>
    <scope>NUCLEOTIDE SEQUENCE [LARGE SCALE GENOMIC DNA]</scope>
    <source>
        <strain>168</strain>
    </source>
</reference>
<reference key="5">
    <citation type="journal article" date="2008" name="Mol. Microbiol.">
        <title>MinJ (YvjD) is a topological determinant of cell division in Bacillus subtilis.</title>
        <authorList>
            <person name="Patrick J.E."/>
            <person name="Kearns D.B."/>
        </authorList>
    </citation>
    <scope>INTERACTION WITH MINJ</scope>
    <source>
        <strain>3610</strain>
    </source>
</reference>
<reference key="6">
    <citation type="journal article" date="2008" name="Mol. Microbiol.">
        <title>A novel component of the division-site selection system of Bacillus subtilis and a new mode of action for the division inhibitor MinCD.</title>
        <authorList>
            <person name="Bramkamp M."/>
            <person name="Emmins R."/>
            <person name="Weston L."/>
            <person name="Donovan C."/>
            <person name="Daniel R.A."/>
            <person name="Errington J."/>
        </authorList>
    </citation>
    <scope>INTERACTION WITH MINJ</scope>
    <source>
        <strain>168</strain>
    </source>
</reference>
<comment type="function">
    <text evidence="1">ATPase required for the correct placement of the division site. Cell division inhibitors MinC and MinD act in concert to form an inhibitor capable of blocking formation of the polar Z ring septums. Rapidly oscillates between the poles of the cell to destabilize FtsZ filaments that have formed before they mature into polar Z rings (By similarity).</text>
</comment>
<comment type="subunit">
    <text evidence="1 3 4">Interacts with MinC and FtsZ (By similarity). Interacts with MinJ.</text>
</comment>
<comment type="interaction">
    <interactant intactId="EBI-6502875">
        <id>Q01464</id>
    </interactant>
    <interactant intactId="EBI-9304968">
        <id>Q01463</id>
        <label>minC</label>
    </interactant>
    <organismsDiffer>false</organismsDiffer>
    <experiments>3</experiments>
</comment>
<comment type="interaction">
    <interactant intactId="EBI-6502875">
        <id>Q01464</id>
    </interactant>
    <interactant intactId="EBI-9302929">
        <id>P96716</id>
        <label>ywqD</label>
    </interactant>
    <organismsDiffer>false</organismsDiffer>
    <experiments>4</experiments>
</comment>
<comment type="subcellular location">
    <subcellularLocation>
        <location>Cell membrane</location>
        <topology>Peripheral membrane protein</topology>
    </subcellularLocation>
</comment>
<comment type="similarity">
    <text evidence="5">Belongs to the ParA family. MinD subfamily.</text>
</comment>
<gene>
    <name type="primary">minD</name>
    <name type="synonym">divIVB</name>
    <name type="ordered locus">BSU27990</name>
</gene>
<keyword id="KW-0067">ATP-binding</keyword>
<keyword id="KW-0131">Cell cycle</keyword>
<keyword id="KW-0132">Cell division</keyword>
<keyword id="KW-1003">Cell membrane</keyword>
<keyword id="KW-0472">Membrane</keyword>
<keyword id="KW-0547">Nucleotide-binding</keyword>
<keyword id="KW-1185">Reference proteome</keyword>
<keyword id="KW-0717">Septation</keyword>
<dbReference type="EMBL" id="M95582">
    <property type="protein sequence ID" value="AAA22609.1"/>
    <property type="molecule type" value="Genomic_DNA"/>
</dbReference>
<dbReference type="EMBL" id="Z15113">
    <property type="protein sequence ID" value="CAA78818.1"/>
    <property type="molecule type" value="Genomic_DNA"/>
</dbReference>
<dbReference type="EMBL" id="M96343">
    <property type="protein sequence ID" value="AAA22401.1"/>
    <property type="molecule type" value="Genomic_DNA"/>
</dbReference>
<dbReference type="EMBL" id="AL009126">
    <property type="protein sequence ID" value="CAB14759.1"/>
    <property type="molecule type" value="Genomic_DNA"/>
</dbReference>
<dbReference type="PIR" id="S31205">
    <property type="entry name" value="G45239"/>
</dbReference>
<dbReference type="RefSeq" id="NP_390677.1">
    <property type="nucleotide sequence ID" value="NC_000964.3"/>
</dbReference>
<dbReference type="RefSeq" id="WP_004398624.1">
    <property type="nucleotide sequence ID" value="NZ_OZ025638.1"/>
</dbReference>
<dbReference type="SMR" id="Q01464"/>
<dbReference type="FunCoup" id="Q01464">
    <property type="interactions" value="311"/>
</dbReference>
<dbReference type="IntAct" id="Q01464">
    <property type="interactions" value="8"/>
</dbReference>
<dbReference type="MINT" id="Q01464"/>
<dbReference type="STRING" id="224308.BSU27990"/>
<dbReference type="ChEMBL" id="CHEMBL5291531"/>
<dbReference type="jPOST" id="Q01464"/>
<dbReference type="PaxDb" id="224308-BSU27990"/>
<dbReference type="EnsemblBacteria" id="CAB14759">
    <property type="protein sequence ID" value="CAB14759"/>
    <property type="gene ID" value="BSU_27990"/>
</dbReference>
<dbReference type="GeneID" id="937499"/>
<dbReference type="KEGG" id="bsu:BSU27990"/>
<dbReference type="PATRIC" id="fig|224308.179.peg.3041"/>
<dbReference type="eggNOG" id="COG2894">
    <property type="taxonomic scope" value="Bacteria"/>
</dbReference>
<dbReference type="InParanoid" id="Q01464"/>
<dbReference type="OrthoDB" id="9773088at2"/>
<dbReference type="PhylomeDB" id="Q01464"/>
<dbReference type="BioCyc" id="BSUB:BSU27990-MONOMER"/>
<dbReference type="Proteomes" id="UP000001570">
    <property type="component" value="Chromosome"/>
</dbReference>
<dbReference type="GO" id="GO:0009898">
    <property type="term" value="C:cytoplasmic side of plasma membrane"/>
    <property type="evidence" value="ECO:0000318"/>
    <property type="project" value="GO_Central"/>
</dbReference>
<dbReference type="GO" id="GO:0005829">
    <property type="term" value="C:cytosol"/>
    <property type="evidence" value="ECO:0000318"/>
    <property type="project" value="GO_Central"/>
</dbReference>
<dbReference type="GO" id="GO:0005524">
    <property type="term" value="F:ATP binding"/>
    <property type="evidence" value="ECO:0000318"/>
    <property type="project" value="GO_Central"/>
</dbReference>
<dbReference type="GO" id="GO:0016887">
    <property type="term" value="F:ATP hydrolysis activity"/>
    <property type="evidence" value="ECO:0000318"/>
    <property type="project" value="GO_Central"/>
</dbReference>
<dbReference type="GO" id="GO:0000917">
    <property type="term" value="P:division septum assembly"/>
    <property type="evidence" value="ECO:0007669"/>
    <property type="project" value="UniProtKB-KW"/>
</dbReference>
<dbReference type="CDD" id="cd02036">
    <property type="entry name" value="MinD"/>
    <property type="match status" value="1"/>
</dbReference>
<dbReference type="FunFam" id="3.40.50.300:FF:000068">
    <property type="entry name" value="Site-determining protein"/>
    <property type="match status" value="1"/>
</dbReference>
<dbReference type="Gene3D" id="3.40.50.300">
    <property type="entry name" value="P-loop containing nucleotide triphosphate hydrolases"/>
    <property type="match status" value="1"/>
</dbReference>
<dbReference type="InterPro" id="IPR002586">
    <property type="entry name" value="CobQ/CobB/MinD/ParA_Nub-bd_dom"/>
</dbReference>
<dbReference type="InterPro" id="IPR010223">
    <property type="entry name" value="MinD"/>
</dbReference>
<dbReference type="InterPro" id="IPR025501">
    <property type="entry name" value="MinD_FleN"/>
</dbReference>
<dbReference type="InterPro" id="IPR027417">
    <property type="entry name" value="P-loop_NTPase"/>
</dbReference>
<dbReference type="InterPro" id="IPR050625">
    <property type="entry name" value="ParA/MinD_ATPase"/>
</dbReference>
<dbReference type="NCBIfam" id="TIGR01968">
    <property type="entry name" value="minD_bact"/>
    <property type="match status" value="1"/>
</dbReference>
<dbReference type="PANTHER" id="PTHR43384:SF6">
    <property type="entry name" value="SEPTUM SITE-DETERMINING PROTEIN MIND HOMOLOG, CHLOROPLASTIC"/>
    <property type="match status" value="1"/>
</dbReference>
<dbReference type="PANTHER" id="PTHR43384">
    <property type="entry name" value="SEPTUM SITE-DETERMINING PROTEIN MIND HOMOLOG, CHLOROPLASTIC-RELATED"/>
    <property type="match status" value="1"/>
</dbReference>
<dbReference type="Pfam" id="PF01656">
    <property type="entry name" value="CbiA"/>
    <property type="match status" value="1"/>
</dbReference>
<dbReference type="PIRSF" id="PIRSF003092">
    <property type="entry name" value="MinD"/>
    <property type="match status" value="1"/>
</dbReference>
<dbReference type="SUPFAM" id="SSF52540">
    <property type="entry name" value="P-loop containing nucleoside triphosphate hydrolases"/>
    <property type="match status" value="1"/>
</dbReference>